<dbReference type="EC" id="1.3.8.10" evidence="1"/>
<dbReference type="EMBL" id="CP000148">
    <property type="protein sequence ID" value="ABB33519.1"/>
    <property type="molecule type" value="Genomic_DNA"/>
</dbReference>
<dbReference type="RefSeq" id="WP_004512530.1">
    <property type="nucleotide sequence ID" value="NC_007517.1"/>
</dbReference>
<dbReference type="PDB" id="7P98">
    <property type="method" value="X-ray"/>
    <property type="resolution" value="2.00 A"/>
    <property type="chains" value="A/B=1-380"/>
</dbReference>
<dbReference type="PDB" id="7P9A">
    <property type="method" value="X-ray"/>
    <property type="resolution" value="1.50 A"/>
    <property type="chains" value="A/B=1-380"/>
</dbReference>
<dbReference type="PDB" id="7P9X">
    <property type="method" value="X-ray"/>
    <property type="resolution" value="1.65 A"/>
    <property type="chains" value="A/B/C/D=1-380"/>
</dbReference>
<dbReference type="PDBsum" id="7P98"/>
<dbReference type="PDBsum" id="7P9A"/>
<dbReference type="PDBsum" id="7P9X"/>
<dbReference type="SMR" id="Q39QF5"/>
<dbReference type="STRING" id="269799.Gmet_3306"/>
<dbReference type="KEGG" id="gme:Gmet_3306"/>
<dbReference type="eggNOG" id="COG1960">
    <property type="taxonomic scope" value="Bacteria"/>
</dbReference>
<dbReference type="HOGENOM" id="CLU_018204_0_2_7"/>
<dbReference type="BRENDA" id="1.3.8.10">
    <property type="organism ID" value="2414"/>
</dbReference>
<dbReference type="Proteomes" id="UP000007073">
    <property type="component" value="Chromosome"/>
</dbReference>
<dbReference type="GO" id="GO:0003995">
    <property type="term" value="F:acyl-CoA dehydrogenase activity"/>
    <property type="evidence" value="ECO:0007669"/>
    <property type="project" value="InterPro"/>
</dbReference>
<dbReference type="GO" id="GO:0050660">
    <property type="term" value="F:flavin adenine dinucleotide binding"/>
    <property type="evidence" value="ECO:0007669"/>
    <property type="project" value="InterPro"/>
</dbReference>
<dbReference type="FunFam" id="1.20.140.10:FF:000004">
    <property type="entry name" value="Acyl-CoA dehydrogenase FadE25"/>
    <property type="match status" value="1"/>
</dbReference>
<dbReference type="FunFam" id="2.40.110.10:FF:000001">
    <property type="entry name" value="Acyl-CoA dehydrogenase, mitochondrial"/>
    <property type="match status" value="1"/>
</dbReference>
<dbReference type="Gene3D" id="1.10.540.10">
    <property type="entry name" value="Acyl-CoA dehydrogenase/oxidase, N-terminal domain"/>
    <property type="match status" value="1"/>
</dbReference>
<dbReference type="Gene3D" id="2.40.110.10">
    <property type="entry name" value="Butyryl-CoA Dehydrogenase, subunit A, domain 2"/>
    <property type="match status" value="1"/>
</dbReference>
<dbReference type="Gene3D" id="1.20.140.10">
    <property type="entry name" value="Butyryl-CoA Dehydrogenase, subunit A, domain 3"/>
    <property type="match status" value="1"/>
</dbReference>
<dbReference type="InterPro" id="IPR006089">
    <property type="entry name" value="Acyl-CoA_DH_CS"/>
</dbReference>
<dbReference type="InterPro" id="IPR006091">
    <property type="entry name" value="Acyl-CoA_Oxase/DH_mid-dom"/>
</dbReference>
<dbReference type="InterPro" id="IPR046373">
    <property type="entry name" value="Acyl-CoA_Oxase/DH_mid-dom_sf"/>
</dbReference>
<dbReference type="InterPro" id="IPR036250">
    <property type="entry name" value="AcylCo_DH-like_C"/>
</dbReference>
<dbReference type="InterPro" id="IPR009075">
    <property type="entry name" value="AcylCo_DH/oxidase_C"/>
</dbReference>
<dbReference type="InterPro" id="IPR013786">
    <property type="entry name" value="AcylCoA_DH/ox_N"/>
</dbReference>
<dbReference type="InterPro" id="IPR037069">
    <property type="entry name" value="AcylCoA_DH/ox_N_sf"/>
</dbReference>
<dbReference type="InterPro" id="IPR009100">
    <property type="entry name" value="AcylCoA_DH/oxidase_NM_dom_sf"/>
</dbReference>
<dbReference type="PANTHER" id="PTHR43884">
    <property type="entry name" value="ACYL-COA DEHYDROGENASE"/>
    <property type="match status" value="1"/>
</dbReference>
<dbReference type="PANTHER" id="PTHR43884:SF12">
    <property type="entry name" value="ISOVALERYL-COA DEHYDROGENASE, MITOCHONDRIAL-RELATED"/>
    <property type="match status" value="1"/>
</dbReference>
<dbReference type="Pfam" id="PF00441">
    <property type="entry name" value="Acyl-CoA_dh_1"/>
    <property type="match status" value="1"/>
</dbReference>
<dbReference type="Pfam" id="PF02770">
    <property type="entry name" value="Acyl-CoA_dh_M"/>
    <property type="match status" value="1"/>
</dbReference>
<dbReference type="Pfam" id="PF02771">
    <property type="entry name" value="Acyl-CoA_dh_N"/>
    <property type="match status" value="1"/>
</dbReference>
<dbReference type="PIRSF" id="PIRSF016578">
    <property type="entry name" value="HsaA"/>
    <property type="match status" value="1"/>
</dbReference>
<dbReference type="SUPFAM" id="SSF47203">
    <property type="entry name" value="Acyl-CoA dehydrogenase C-terminal domain-like"/>
    <property type="match status" value="1"/>
</dbReference>
<dbReference type="SUPFAM" id="SSF56645">
    <property type="entry name" value="Acyl-CoA dehydrogenase NM domain-like"/>
    <property type="match status" value="1"/>
</dbReference>
<dbReference type="PROSITE" id="PS00073">
    <property type="entry name" value="ACYL_COA_DH_2"/>
    <property type="match status" value="1"/>
</dbReference>
<gene>
    <name evidence="6" type="ordered locus">Gmet_3306</name>
</gene>
<proteinExistence type="evidence at protein level"/>
<keyword id="KW-0002">3D-structure</keyword>
<keyword id="KW-0274">FAD</keyword>
<keyword id="KW-0285">Flavoprotein</keyword>
<keyword id="KW-0560">Oxidoreductase</keyword>
<keyword id="KW-1185">Reference proteome</keyword>
<reference key="1">
    <citation type="journal article" date="2009" name="BMC Microbiol.">
        <title>The genome sequence of Geobacter metallireducens: features of metabolism, physiology and regulation common and dissimilar to Geobacter sulfurreducens.</title>
        <authorList>
            <person name="Aklujkar M."/>
            <person name="Krushkal J."/>
            <person name="DiBartolo G."/>
            <person name="Lapidus A."/>
            <person name="Land M.L."/>
            <person name="Lovley D.R."/>
        </authorList>
    </citation>
    <scope>NUCLEOTIDE SEQUENCE [LARGE SCALE GENOMIC DNA]</scope>
    <source>
        <strain>ATCC 53774 / DSM 7210 / GS-15</strain>
    </source>
</reference>
<reference key="2">
    <citation type="journal article" date="2014" name="J. Bacteriol.">
        <title>Enzymes involved in a novel anaerobic cyclohexane carboxylic acid degradation pathway.</title>
        <authorList>
            <person name="Kung J.W."/>
            <person name="Meier A.K."/>
            <person name="Mergelsberg M."/>
            <person name="Boll M."/>
        </authorList>
    </citation>
    <scope>FUNCTION</scope>
    <scope>CATALYTIC ACTIVITY</scope>
    <scope>COFACTOR</scope>
    <scope>BIOPHYSICOCHEMICAL PROPERTIES</scope>
    <scope>SUBUNIT</scope>
    <scope>INDUCTION</scope>
    <source>
        <strain>ATCC 53774 / DSM 7210 / GS-15</strain>
    </source>
</reference>
<reference evidence="7 8 9" key="3">
    <citation type="journal article" date="2021" name="ChemBioChem">
        <title>Structural Basis of Cyclic 1,3-Diene Forming Acyl-Coenzyme A Dehydrogenases.</title>
        <authorList>
            <person name="Kung J.W."/>
            <person name="Meier A.K."/>
            <person name="Willistein M."/>
            <person name="Weidenweber S."/>
            <person name="Demmer U."/>
            <person name="Ermler U."/>
            <person name="Boll M."/>
        </authorList>
    </citation>
    <scope>X-RAY CRYSTALLOGRAPHY (1.50 ANGSTROMS) IN COMPLEXES WITH FAD; CYCLOHEX-1-ENE-1-CARBONYL-COA AND CYCLOHEXA-1,5-DIENE-1-CARBONYL-COA</scope>
    <scope>FUNCTION</scope>
    <scope>CATALYTIC ACTIVITY</scope>
    <scope>REACTION MECHANISM</scope>
    <scope>COFACTOR</scope>
    <scope>SUBUNIT</scope>
    <scope>ACTIVE SITE</scope>
    <scope>MUTAGENESIS OF ASP-91; ASN-241 AND THR-363</scope>
</reference>
<evidence type="ECO:0000269" key="1">
    <source>
    </source>
</evidence>
<evidence type="ECO:0000269" key="2">
    <source>
    </source>
</evidence>
<evidence type="ECO:0000303" key="3">
    <source>
    </source>
</evidence>
<evidence type="ECO:0000305" key="4"/>
<evidence type="ECO:0000305" key="5">
    <source>
    </source>
</evidence>
<evidence type="ECO:0000312" key="6">
    <source>
        <dbReference type="EMBL" id="ABB33519.1"/>
    </source>
</evidence>
<evidence type="ECO:0007744" key="7">
    <source>
        <dbReference type="PDB" id="7P98"/>
    </source>
</evidence>
<evidence type="ECO:0007744" key="8">
    <source>
        <dbReference type="PDB" id="7P9A"/>
    </source>
</evidence>
<evidence type="ECO:0007744" key="9">
    <source>
        <dbReference type="PDB" id="7P9X"/>
    </source>
</evidence>
<evidence type="ECO:0007829" key="10">
    <source>
        <dbReference type="PDB" id="7P9A"/>
    </source>
</evidence>
<organism>
    <name type="scientific">Geobacter metallireducens (strain ATCC 53774 / DSM 7210 / GS-15)</name>
    <dbReference type="NCBI Taxonomy" id="269799"/>
    <lineage>
        <taxon>Bacteria</taxon>
        <taxon>Pseudomonadati</taxon>
        <taxon>Thermodesulfobacteriota</taxon>
        <taxon>Desulfuromonadia</taxon>
        <taxon>Geobacterales</taxon>
        <taxon>Geobacteraceae</taxon>
        <taxon>Geobacter</taxon>
    </lineage>
</organism>
<name>CH1CO_GEOMG</name>
<sequence length="380" mass="40990">MKHLTEEQKLTLDMVRDVATREIAPRALELDEKSLFPEYARDLFAKLGLLNPLLPAAYGGTEMGVLTLALILEELGRVCASTALLLIAQTDGMLPIIHGGSPELKERYLRRFAGESTLLTALAATEPAAGSDLLAMKTRAVRQGDKYVINGQKCFITNGSVADVIVVYAYTDPEKGSKGISAFVVEKGTPGLVYGRNESKMGMRGSINSELFFENMEVPAENIIGAEGTGFANLMQTLSTNRVFCAAQAVGIAQGALDIAVRHTQDRVQFGKPIAHLAPVQFMVADMATAVEASRLLTRKAAELLDDGDKKAVLYGSMAKTMASDTAMRVTTDAVQVLGGSGYMKENGVERMMRDAKLTQIYTGTNQITRMVTGRALLFP</sequence>
<protein>
    <recommendedName>
        <fullName evidence="4">Cyclohex-1-ene-1-carbonyl-CoA dehydrogenase</fullName>
        <shortName evidence="3">CHeneCoA dehydrogenase</shortName>
        <ecNumber evidence="1">1.3.8.10</ecNumber>
    </recommendedName>
</protein>
<feature type="chain" id="PRO_0000460713" description="Cyclohex-1-ene-1-carbonyl-CoA dehydrogenase">
    <location>
        <begin position="1"/>
        <end position="380"/>
    </location>
</feature>
<feature type="active site" description="Proton acceptor" evidence="5">
    <location>
        <position position="91"/>
    </location>
</feature>
<feature type="binding site" evidence="2 7 8 9">
    <location>
        <position position="122"/>
    </location>
    <ligand>
        <name>FAD</name>
        <dbReference type="ChEBI" id="CHEBI:57692"/>
    </ligand>
</feature>
<feature type="binding site" evidence="2 7 8 9">
    <location>
        <position position="124"/>
    </location>
    <ligand>
        <name>FAD</name>
        <dbReference type="ChEBI" id="CHEBI:57692"/>
    </ligand>
</feature>
<feature type="binding site" evidence="2 7 8 9">
    <location>
        <position position="125"/>
    </location>
    <ligand>
        <name>FAD</name>
        <dbReference type="ChEBI" id="CHEBI:57692"/>
    </ligand>
</feature>
<feature type="binding site" evidence="2 9">
    <location>
        <position position="131"/>
    </location>
    <ligand>
        <name>cyclohex-1-ene-1-carbonyl-CoA</name>
        <dbReference type="ChEBI" id="CHEBI:76270"/>
    </ligand>
</feature>
<feature type="binding site" evidence="2 8">
    <location>
        <position position="131"/>
    </location>
    <ligand>
        <name>cyclohexa-1,5-diene-1-carbonyl-CoA</name>
        <dbReference type="ChEBI" id="CHEBI:57374"/>
    </ligand>
</feature>
<feature type="binding site" evidence="2 7 8 9">
    <location>
        <position position="131"/>
    </location>
    <ligand>
        <name>FAD</name>
        <dbReference type="ChEBI" id="CHEBI:57692"/>
    </ligand>
</feature>
<feature type="binding site" evidence="2 7 8 9">
    <location>
        <position position="157"/>
    </location>
    <ligand>
        <name>FAD</name>
        <dbReference type="ChEBI" id="CHEBI:57692"/>
    </ligand>
</feature>
<feature type="binding site" evidence="2 9">
    <location>
        <position position="178"/>
    </location>
    <ligand>
        <name>cyclohex-1-ene-1-carbonyl-CoA</name>
        <dbReference type="ChEBI" id="CHEBI:76270"/>
    </ligand>
</feature>
<feature type="binding site" evidence="2 8">
    <location>
        <position position="178"/>
    </location>
    <ligand>
        <name>cyclohexa-1,5-diene-1-carbonyl-CoA</name>
        <dbReference type="ChEBI" id="CHEBI:57374"/>
    </ligand>
</feature>
<feature type="binding site" evidence="2 9">
    <location>
        <position position="242"/>
    </location>
    <ligand>
        <name>cyclohex-1-ene-1-carbonyl-CoA</name>
        <dbReference type="ChEBI" id="CHEBI:76270"/>
    </ligand>
</feature>
<feature type="binding site" evidence="2 8">
    <location>
        <position position="242"/>
    </location>
    <ligand>
        <name>cyclohexa-1,5-diene-1-carbonyl-CoA</name>
        <dbReference type="ChEBI" id="CHEBI:57374"/>
    </ligand>
</feature>
<feature type="binding site" evidence="2 9">
    <location>
        <position position="363"/>
    </location>
    <ligand>
        <name>cyclohex-1-ene-1-carbonyl-CoA</name>
        <dbReference type="ChEBI" id="CHEBI:76270"/>
    </ligand>
</feature>
<feature type="binding site" evidence="2 8">
    <location>
        <position position="363"/>
    </location>
    <ligand>
        <name>cyclohexa-1,5-diene-1-carbonyl-CoA</name>
        <dbReference type="ChEBI" id="CHEBI:57374"/>
    </ligand>
</feature>
<feature type="binding site" evidence="2 7 8 9">
    <location>
        <position position="365"/>
    </location>
    <ligand>
        <name>FAD</name>
        <dbReference type="ChEBI" id="CHEBI:57692"/>
    </ligand>
</feature>
<feature type="binding site" evidence="2 7 8 9">
    <location>
        <position position="367"/>
    </location>
    <ligand>
        <name>FAD</name>
        <dbReference type="ChEBI" id="CHEBI:57692"/>
    </ligand>
</feature>
<feature type="binding site" evidence="2 9">
    <location>
        <position position="375"/>
    </location>
    <ligand>
        <name>cyclohex-1-ene-1-carbonyl-CoA</name>
        <dbReference type="ChEBI" id="CHEBI:76270"/>
    </ligand>
</feature>
<feature type="binding site" evidence="2 8">
    <location>
        <position position="375"/>
    </location>
    <ligand>
        <name>cyclohexa-1,5-diene-1-carbonyl-CoA</name>
        <dbReference type="ChEBI" id="CHEBI:57374"/>
    </ligand>
</feature>
<feature type="mutagenesis site" description="Retains minor activity." evidence="2">
    <original>D</original>
    <variation>E</variation>
    <location>
        <position position="91"/>
    </location>
</feature>
<feature type="mutagenesis site" description="Loss of activity. Gains a low but significant C1,C2-dehydrogenation activity, but the C3,C6- and C3,C4-dehydrogenating activities are largely diminished; when associated with D-241." evidence="2">
    <original>D</original>
    <variation>N</variation>
    <location>
        <position position="91"/>
    </location>
</feature>
<feature type="mutagenesis site" description="Shows decreased activity, with a shift towards C3,C4- versus C3,C6-dehydrogenation. Gains a low but significant C1,C2-dehydrogenation activity, but the C3,C6- and C3,C4-dehydrogenating activities are largely diminished; when associated with N-91." evidence="2">
    <original>N</original>
    <variation>D</variation>
    <location>
        <position position="241"/>
    </location>
</feature>
<feature type="mutagenesis site" description="Shows decreased activity, with a shift towards C3,C4- versus C3,C6-dehydrogenation." evidence="2">
    <original>T</original>
    <variation>V</variation>
    <location>
        <position position="363"/>
    </location>
</feature>
<feature type="helix" evidence="10">
    <location>
        <begin position="6"/>
        <end position="21"/>
    </location>
</feature>
<feature type="helix" evidence="10">
    <location>
        <begin position="24"/>
        <end position="26"/>
    </location>
</feature>
<feature type="helix" evidence="10">
    <location>
        <begin position="27"/>
        <end position="32"/>
    </location>
</feature>
<feature type="helix" evidence="10">
    <location>
        <begin position="38"/>
        <end position="46"/>
    </location>
</feature>
<feature type="helix" evidence="10">
    <location>
        <begin position="56"/>
        <end position="58"/>
    </location>
</feature>
<feature type="helix" evidence="10">
    <location>
        <begin position="65"/>
        <end position="78"/>
    </location>
</feature>
<feature type="helix" evidence="10">
    <location>
        <begin position="80"/>
        <end position="97"/>
    </location>
</feature>
<feature type="helix" evidence="10">
    <location>
        <begin position="102"/>
        <end position="109"/>
    </location>
</feature>
<feature type="helix" evidence="10">
    <location>
        <begin position="110"/>
        <end position="112"/>
    </location>
</feature>
<feature type="strand" evidence="10">
    <location>
        <begin position="120"/>
        <end position="123"/>
    </location>
</feature>
<feature type="strand" evidence="10">
    <location>
        <begin position="129"/>
        <end position="131"/>
    </location>
</feature>
<feature type="helix" evidence="10">
    <location>
        <begin position="133"/>
        <end position="135"/>
    </location>
</feature>
<feature type="strand" evidence="10">
    <location>
        <begin position="139"/>
        <end position="143"/>
    </location>
</feature>
<feature type="strand" evidence="10">
    <location>
        <begin position="146"/>
        <end position="157"/>
    </location>
</feature>
<feature type="turn" evidence="10">
    <location>
        <begin position="158"/>
        <end position="161"/>
    </location>
</feature>
<feature type="strand" evidence="10">
    <location>
        <begin position="163"/>
        <end position="171"/>
    </location>
</feature>
<feature type="helix" evidence="10">
    <location>
        <begin position="173"/>
        <end position="178"/>
    </location>
</feature>
<feature type="strand" evidence="10">
    <location>
        <begin position="179"/>
        <end position="186"/>
    </location>
</feature>
<feature type="strand" evidence="10">
    <location>
        <begin position="192"/>
        <end position="197"/>
    </location>
</feature>
<feature type="strand" evidence="10">
    <location>
        <begin position="208"/>
        <end position="219"/>
    </location>
</feature>
<feature type="helix" evidence="10">
    <location>
        <begin position="220"/>
        <end position="222"/>
    </location>
</feature>
<feature type="strand" evidence="10">
    <location>
        <begin position="223"/>
        <end position="226"/>
    </location>
</feature>
<feature type="helix" evidence="10">
    <location>
        <begin position="230"/>
        <end position="266"/>
    </location>
</feature>
<feature type="helix" evidence="10">
    <location>
        <begin position="274"/>
        <end position="276"/>
    </location>
</feature>
<feature type="helix" evidence="10">
    <location>
        <begin position="278"/>
        <end position="306"/>
    </location>
</feature>
<feature type="helix" evidence="10">
    <location>
        <begin position="312"/>
        <end position="338"/>
    </location>
</feature>
<feature type="helix" evidence="10">
    <location>
        <begin position="339"/>
        <end position="343"/>
    </location>
</feature>
<feature type="helix" evidence="10">
    <location>
        <begin position="345"/>
        <end position="347"/>
    </location>
</feature>
<feature type="helix" evidence="10">
    <location>
        <begin position="349"/>
        <end position="359"/>
    </location>
</feature>
<feature type="strand" evidence="10">
    <location>
        <begin position="362"/>
        <end position="364"/>
    </location>
</feature>
<feature type="helix" evidence="10">
    <location>
        <begin position="366"/>
        <end position="378"/>
    </location>
</feature>
<comment type="function">
    <text evidence="1 2">Acyl-CoA dehydrogenase involved in the anaerobic degradation of cyclohexane carboxylic acid (CHC) (PubMed:25112478). Catalyzes the 1,4-dehydrogenation at C3 and C6 of cyclohex-1-ene-1-carbonyl-CoA (CHeneCoA or Ch1CoA) to cyclohexa-1,5-diene-1-carbonyl-CoA (CHdieneCoA or Ch1,5CoA) (PubMed:25112478, PubMed:34555236). Also able to catalyze, at a lower rate, the dehydrogenation at C3 and C4 of CHdieneCoA to benzoyl-CoA (PubMed:25112478, PubMed:34555236).</text>
</comment>
<comment type="catalytic activity">
    <reaction evidence="1 2">
        <text>cyclohex-1-ene-1-carbonyl-CoA + oxidized [electron-transfer flavoprotein] + H(+) = cyclohexa-1,5-diene-1-carbonyl-CoA + reduced [electron-transfer flavoprotein]</text>
        <dbReference type="Rhea" id="RHEA:12993"/>
        <dbReference type="Rhea" id="RHEA-COMP:10685"/>
        <dbReference type="Rhea" id="RHEA-COMP:10686"/>
        <dbReference type="ChEBI" id="CHEBI:15378"/>
        <dbReference type="ChEBI" id="CHEBI:57374"/>
        <dbReference type="ChEBI" id="CHEBI:57692"/>
        <dbReference type="ChEBI" id="CHEBI:58307"/>
        <dbReference type="ChEBI" id="CHEBI:76270"/>
        <dbReference type="EC" id="1.3.8.10"/>
    </reaction>
    <physiologicalReaction direction="left-to-right" evidence="1">
        <dbReference type="Rhea" id="RHEA:12994"/>
    </physiologicalReaction>
</comment>
<comment type="cofactor">
    <cofactor evidence="1 2">
        <name>FAD</name>
        <dbReference type="ChEBI" id="CHEBI:57692"/>
    </cofactor>
</comment>
<comment type="biophysicochemical properties">
    <kinetics>
        <KM evidence="1">31 uM for CHeneCoA</KM>
        <KM evidence="1">85 uM for CHdieneCoA</KM>
    </kinetics>
</comment>
<comment type="subunit">
    <text evidence="1 2">Homotetramer.</text>
</comment>
<comment type="induction">
    <text evidence="1">Expression is 3 orders of magnitude higher during growth with CHC than during growth with benzoate.</text>
</comment>
<comment type="similarity">
    <text evidence="4">Belongs to the acyl-CoA dehydrogenase family.</text>
</comment>
<accession>Q39QF5</accession>